<protein>
    <recommendedName>
        <fullName>Beta-2-microglobulin</fullName>
    </recommendedName>
</protein>
<comment type="function">
    <text evidence="1">Component of the class I major histocompatibility complex (MHC). Involved in the presentation of peptide antigens to the immune system (By similarity).</text>
</comment>
<comment type="subunit">
    <text evidence="1">Heterodimer of an alpha chain and a beta chain. Beta-2-microglobulin is the beta-chain of major histocompatibility complex class I molecules (By similarity).</text>
</comment>
<comment type="subcellular location">
    <subcellularLocation>
        <location evidence="1">Secreted</location>
    </subcellularLocation>
</comment>
<comment type="similarity">
    <text evidence="3">Belongs to the beta-2-microglobulin family.</text>
</comment>
<gene>
    <name type="primary">B2M</name>
</gene>
<reference key="1">
    <citation type="journal article" date="1998" name="Immunogenetics">
        <title>Beta-2-microglobulin in neotropical primates (Platyrrhini).</title>
        <authorList>
            <person name="Canavez F.C."/>
            <person name="Ladasky J.J."/>
            <person name="Muniz J.A.P.C."/>
            <person name="Seuanez H.N."/>
            <person name="Parham P."/>
        </authorList>
    </citation>
    <scope>NUCLEOTIDE SEQUENCE [GENOMIC DNA]</scope>
    <source>
        <tissue>Blood</tissue>
    </source>
</reference>
<keyword id="KW-1015">Disulfide bond</keyword>
<keyword id="KW-0391">Immunity</keyword>
<keyword id="KW-0393">Immunoglobulin domain</keyword>
<keyword id="KW-0490">MHC I</keyword>
<keyword id="KW-0964">Secreted</keyword>
<keyword id="KW-0732">Signal</keyword>
<name>B2MG_CALKU</name>
<evidence type="ECO:0000250" key="1"/>
<evidence type="ECO:0000255" key="2">
    <source>
        <dbReference type="PROSITE-ProRule" id="PRU00114"/>
    </source>
</evidence>
<evidence type="ECO:0000305" key="3"/>
<proteinExistence type="inferred from homology"/>
<sequence>MASSVVVALLVLLSLSGLEAIQHAPKIQVYSRHPAENGKPNFLNCYVSGFHPSDIEVDLLKNGKKIEKVEHSDLSFSKDWSFYLLYYTEFTPSEKDEYACRVSHVTFSTPKTVKWDRNI</sequence>
<organism>
    <name type="scientific">Callithrix kuhlii</name>
    <name type="common">Wied's black-tufted-ear marmoset</name>
    <dbReference type="NCBI Taxonomy" id="867363"/>
    <lineage>
        <taxon>Eukaryota</taxon>
        <taxon>Metazoa</taxon>
        <taxon>Chordata</taxon>
        <taxon>Craniata</taxon>
        <taxon>Vertebrata</taxon>
        <taxon>Euteleostomi</taxon>
        <taxon>Mammalia</taxon>
        <taxon>Eutheria</taxon>
        <taxon>Euarchontoglires</taxon>
        <taxon>Primates</taxon>
        <taxon>Haplorrhini</taxon>
        <taxon>Platyrrhini</taxon>
        <taxon>Cebidae</taxon>
        <taxon>Callitrichinae</taxon>
        <taxon>Callithrix</taxon>
        <taxon>Callithrix</taxon>
    </lineage>
</organism>
<accession>P63062</accession>
<accession>O77522</accession>
<feature type="signal peptide" evidence="1">
    <location>
        <begin position="1"/>
        <end position="20"/>
    </location>
</feature>
<feature type="chain" id="PRO_0000018765" description="Beta-2-microglobulin">
    <location>
        <begin position="21"/>
        <end position="119"/>
    </location>
</feature>
<feature type="domain" description="Ig-like C1-type">
    <location>
        <begin position="25"/>
        <end position="114"/>
    </location>
</feature>
<feature type="disulfide bond" evidence="2">
    <location>
        <begin position="45"/>
        <end position="100"/>
    </location>
</feature>
<dbReference type="EMBL" id="AF032045">
    <property type="protein sequence ID" value="AAC52088.1"/>
    <property type="molecule type" value="Genomic_DNA"/>
</dbReference>
<dbReference type="EMBL" id="AF032044">
    <property type="protein sequence ID" value="AAC52088.1"/>
    <property type="status" value="JOINED"/>
    <property type="molecule type" value="Genomic_DNA"/>
</dbReference>
<dbReference type="SMR" id="P63062"/>
<dbReference type="GO" id="GO:0005576">
    <property type="term" value="C:extracellular region"/>
    <property type="evidence" value="ECO:0007669"/>
    <property type="project" value="UniProtKB-SubCell"/>
</dbReference>
<dbReference type="GO" id="GO:0042612">
    <property type="term" value="C:MHC class I protein complex"/>
    <property type="evidence" value="ECO:0007669"/>
    <property type="project" value="UniProtKB-KW"/>
</dbReference>
<dbReference type="GO" id="GO:0002474">
    <property type="term" value="P:antigen processing and presentation of peptide antigen via MHC class I"/>
    <property type="evidence" value="ECO:0007669"/>
    <property type="project" value="UniProtKB-KW"/>
</dbReference>
<dbReference type="GO" id="GO:0006955">
    <property type="term" value="P:immune response"/>
    <property type="evidence" value="ECO:0007669"/>
    <property type="project" value="InterPro"/>
</dbReference>
<dbReference type="CDD" id="cd05770">
    <property type="entry name" value="IgC1_beta2m"/>
    <property type="match status" value="1"/>
</dbReference>
<dbReference type="FunFam" id="2.60.40.10:FF:001005">
    <property type="entry name" value="Beta-2-microglobulin"/>
    <property type="match status" value="1"/>
</dbReference>
<dbReference type="Gene3D" id="2.60.40.10">
    <property type="entry name" value="Immunoglobulins"/>
    <property type="match status" value="1"/>
</dbReference>
<dbReference type="InterPro" id="IPR015707">
    <property type="entry name" value="B2Microglobulin"/>
</dbReference>
<dbReference type="InterPro" id="IPR007110">
    <property type="entry name" value="Ig-like_dom"/>
</dbReference>
<dbReference type="InterPro" id="IPR036179">
    <property type="entry name" value="Ig-like_dom_sf"/>
</dbReference>
<dbReference type="InterPro" id="IPR013783">
    <property type="entry name" value="Ig-like_fold"/>
</dbReference>
<dbReference type="InterPro" id="IPR003006">
    <property type="entry name" value="Ig/MHC_CS"/>
</dbReference>
<dbReference type="InterPro" id="IPR003597">
    <property type="entry name" value="Ig_C1-set"/>
</dbReference>
<dbReference type="InterPro" id="IPR050160">
    <property type="entry name" value="MHC/Immunoglobulin"/>
</dbReference>
<dbReference type="PANTHER" id="PTHR19944:SF62">
    <property type="entry name" value="BETA-2-MICROGLOBULIN"/>
    <property type="match status" value="1"/>
</dbReference>
<dbReference type="PANTHER" id="PTHR19944">
    <property type="entry name" value="MHC CLASS II-RELATED"/>
    <property type="match status" value="1"/>
</dbReference>
<dbReference type="Pfam" id="PF07654">
    <property type="entry name" value="C1-set"/>
    <property type="match status" value="1"/>
</dbReference>
<dbReference type="SMART" id="SM00407">
    <property type="entry name" value="IGc1"/>
    <property type="match status" value="1"/>
</dbReference>
<dbReference type="SUPFAM" id="SSF48726">
    <property type="entry name" value="Immunoglobulin"/>
    <property type="match status" value="1"/>
</dbReference>
<dbReference type="PROSITE" id="PS50835">
    <property type="entry name" value="IG_LIKE"/>
    <property type="match status" value="1"/>
</dbReference>
<dbReference type="PROSITE" id="PS00290">
    <property type="entry name" value="IG_MHC"/>
    <property type="match status" value="1"/>
</dbReference>